<accession>Q8DJK9</accession>
<comment type="catalytic activity">
    <reaction evidence="1">
        <text>L-methionyl-[protein] + [thioredoxin]-disulfide + H2O = L-methionyl-(R)-S-oxide-[protein] + [thioredoxin]-dithiol</text>
        <dbReference type="Rhea" id="RHEA:24164"/>
        <dbReference type="Rhea" id="RHEA-COMP:10698"/>
        <dbReference type="Rhea" id="RHEA-COMP:10700"/>
        <dbReference type="Rhea" id="RHEA-COMP:12313"/>
        <dbReference type="Rhea" id="RHEA-COMP:12314"/>
        <dbReference type="ChEBI" id="CHEBI:15377"/>
        <dbReference type="ChEBI" id="CHEBI:16044"/>
        <dbReference type="ChEBI" id="CHEBI:29950"/>
        <dbReference type="ChEBI" id="CHEBI:45764"/>
        <dbReference type="ChEBI" id="CHEBI:50058"/>
        <dbReference type="EC" id="1.8.4.12"/>
    </reaction>
</comment>
<comment type="cofactor">
    <cofactor evidence="1">
        <name>Zn(2+)</name>
        <dbReference type="ChEBI" id="CHEBI:29105"/>
    </cofactor>
    <text evidence="1">Binds 1 zinc ion per subunit. The zinc ion is important for the structural integrity of the protein.</text>
</comment>
<comment type="similarity">
    <text evidence="1">Belongs to the MsrB Met sulfoxide reductase family.</text>
</comment>
<keyword id="KW-0479">Metal-binding</keyword>
<keyword id="KW-0560">Oxidoreductase</keyword>
<keyword id="KW-1185">Reference proteome</keyword>
<keyword id="KW-0862">Zinc</keyword>
<evidence type="ECO:0000255" key="1">
    <source>
        <dbReference type="HAMAP-Rule" id="MF_01400"/>
    </source>
</evidence>
<evidence type="ECO:0000255" key="2">
    <source>
        <dbReference type="PROSITE-ProRule" id="PRU01126"/>
    </source>
</evidence>
<sequence>MTKVVKTDAEWQAQLTPEQYYVTRKKGTERAFTGCYWNNKKPGLYSCVCCGTPLFRSETKYDSGTGWPSFWQPLDPNNIRMERDLSHGMVRTEVLCAVCDAHLGHVFEDGPPPTGLRYCINSAALAFVPESAASS</sequence>
<dbReference type="EC" id="1.8.4.12" evidence="1"/>
<dbReference type="EMBL" id="BA000039">
    <property type="protein sequence ID" value="BAC08766.1"/>
    <property type="molecule type" value="Genomic_DNA"/>
</dbReference>
<dbReference type="RefSeq" id="NP_682004.1">
    <property type="nucleotide sequence ID" value="NC_004113.1"/>
</dbReference>
<dbReference type="RefSeq" id="WP_011057056.1">
    <property type="nucleotide sequence ID" value="NC_004113.1"/>
</dbReference>
<dbReference type="SMR" id="Q8DJK9"/>
<dbReference type="STRING" id="197221.gene:10747810"/>
<dbReference type="EnsemblBacteria" id="BAC08766">
    <property type="protein sequence ID" value="BAC08766"/>
    <property type="gene ID" value="BAC08766"/>
</dbReference>
<dbReference type="KEGG" id="tel:tlr1214"/>
<dbReference type="PATRIC" id="fig|197221.4.peg.1278"/>
<dbReference type="eggNOG" id="COG0229">
    <property type="taxonomic scope" value="Bacteria"/>
</dbReference>
<dbReference type="Proteomes" id="UP000000440">
    <property type="component" value="Chromosome"/>
</dbReference>
<dbReference type="GO" id="GO:0005737">
    <property type="term" value="C:cytoplasm"/>
    <property type="evidence" value="ECO:0007669"/>
    <property type="project" value="TreeGrafter"/>
</dbReference>
<dbReference type="GO" id="GO:0033743">
    <property type="term" value="F:peptide-methionine (R)-S-oxide reductase activity"/>
    <property type="evidence" value="ECO:0007669"/>
    <property type="project" value="UniProtKB-UniRule"/>
</dbReference>
<dbReference type="GO" id="GO:0008270">
    <property type="term" value="F:zinc ion binding"/>
    <property type="evidence" value="ECO:0007669"/>
    <property type="project" value="UniProtKB-UniRule"/>
</dbReference>
<dbReference type="GO" id="GO:0030091">
    <property type="term" value="P:protein repair"/>
    <property type="evidence" value="ECO:0007669"/>
    <property type="project" value="InterPro"/>
</dbReference>
<dbReference type="GO" id="GO:0006979">
    <property type="term" value="P:response to oxidative stress"/>
    <property type="evidence" value="ECO:0007669"/>
    <property type="project" value="InterPro"/>
</dbReference>
<dbReference type="FunFam" id="2.170.150.20:FF:000001">
    <property type="entry name" value="Peptide methionine sulfoxide reductase MsrB"/>
    <property type="match status" value="1"/>
</dbReference>
<dbReference type="Gene3D" id="2.170.150.20">
    <property type="entry name" value="Peptide methionine sulfoxide reductase"/>
    <property type="match status" value="1"/>
</dbReference>
<dbReference type="HAMAP" id="MF_01400">
    <property type="entry name" value="MsrB"/>
    <property type="match status" value="1"/>
</dbReference>
<dbReference type="InterPro" id="IPR028427">
    <property type="entry name" value="Met_Sox_Rdtase_MsrB"/>
</dbReference>
<dbReference type="InterPro" id="IPR002579">
    <property type="entry name" value="Met_Sox_Rdtase_MsrB_dom"/>
</dbReference>
<dbReference type="InterPro" id="IPR011057">
    <property type="entry name" value="Mss4-like_sf"/>
</dbReference>
<dbReference type="NCBIfam" id="TIGR00357">
    <property type="entry name" value="peptide-methionine (R)-S-oxide reductase MsrB"/>
    <property type="match status" value="1"/>
</dbReference>
<dbReference type="PANTHER" id="PTHR10173">
    <property type="entry name" value="METHIONINE SULFOXIDE REDUCTASE"/>
    <property type="match status" value="1"/>
</dbReference>
<dbReference type="PANTHER" id="PTHR10173:SF52">
    <property type="entry name" value="METHIONINE-R-SULFOXIDE REDUCTASE B1"/>
    <property type="match status" value="1"/>
</dbReference>
<dbReference type="Pfam" id="PF01641">
    <property type="entry name" value="SelR"/>
    <property type="match status" value="1"/>
</dbReference>
<dbReference type="SUPFAM" id="SSF51316">
    <property type="entry name" value="Mss4-like"/>
    <property type="match status" value="1"/>
</dbReference>
<dbReference type="PROSITE" id="PS51790">
    <property type="entry name" value="MSRB"/>
    <property type="match status" value="1"/>
</dbReference>
<proteinExistence type="inferred from homology"/>
<feature type="chain" id="PRO_0000140311" description="Peptide methionine sulfoxide reductase MsrB">
    <location>
        <begin position="1"/>
        <end position="135"/>
    </location>
</feature>
<feature type="domain" description="MsrB" evidence="2">
    <location>
        <begin position="8"/>
        <end position="130"/>
    </location>
</feature>
<feature type="active site" description="Nucleophile" evidence="2">
    <location>
        <position position="119"/>
    </location>
</feature>
<feature type="binding site" evidence="2">
    <location>
        <position position="47"/>
    </location>
    <ligand>
        <name>Zn(2+)</name>
        <dbReference type="ChEBI" id="CHEBI:29105"/>
    </ligand>
</feature>
<feature type="binding site" evidence="2">
    <location>
        <position position="50"/>
    </location>
    <ligand>
        <name>Zn(2+)</name>
        <dbReference type="ChEBI" id="CHEBI:29105"/>
    </ligand>
</feature>
<feature type="binding site" evidence="2">
    <location>
        <position position="96"/>
    </location>
    <ligand>
        <name>Zn(2+)</name>
        <dbReference type="ChEBI" id="CHEBI:29105"/>
    </ligand>
</feature>
<feature type="binding site" evidence="2">
    <location>
        <position position="99"/>
    </location>
    <ligand>
        <name>Zn(2+)</name>
        <dbReference type="ChEBI" id="CHEBI:29105"/>
    </ligand>
</feature>
<organism>
    <name type="scientific">Thermosynechococcus vestitus (strain NIES-2133 / IAM M-273 / BP-1)</name>
    <dbReference type="NCBI Taxonomy" id="197221"/>
    <lineage>
        <taxon>Bacteria</taxon>
        <taxon>Bacillati</taxon>
        <taxon>Cyanobacteriota</taxon>
        <taxon>Cyanophyceae</taxon>
        <taxon>Acaryochloridales</taxon>
        <taxon>Thermosynechococcaceae</taxon>
        <taxon>Thermosynechococcus</taxon>
    </lineage>
</organism>
<name>MSRB_THEVB</name>
<gene>
    <name evidence="1" type="primary">msrB</name>
    <name type="ordered locus">tlr1214</name>
</gene>
<protein>
    <recommendedName>
        <fullName evidence="1">Peptide methionine sulfoxide reductase MsrB</fullName>
        <ecNumber evidence="1">1.8.4.12</ecNumber>
    </recommendedName>
    <alternativeName>
        <fullName evidence="1">Peptide-methionine (R)-S-oxide reductase</fullName>
    </alternativeName>
</protein>
<reference key="1">
    <citation type="journal article" date="2002" name="DNA Res.">
        <title>Complete genome structure of the thermophilic cyanobacterium Thermosynechococcus elongatus BP-1.</title>
        <authorList>
            <person name="Nakamura Y."/>
            <person name="Kaneko T."/>
            <person name="Sato S."/>
            <person name="Ikeuchi M."/>
            <person name="Katoh H."/>
            <person name="Sasamoto S."/>
            <person name="Watanabe A."/>
            <person name="Iriguchi M."/>
            <person name="Kawashima K."/>
            <person name="Kimura T."/>
            <person name="Kishida Y."/>
            <person name="Kiyokawa C."/>
            <person name="Kohara M."/>
            <person name="Matsumoto M."/>
            <person name="Matsuno A."/>
            <person name="Nakazaki N."/>
            <person name="Shimpo S."/>
            <person name="Sugimoto M."/>
            <person name="Takeuchi C."/>
            <person name="Yamada M."/>
            <person name="Tabata S."/>
        </authorList>
    </citation>
    <scope>NUCLEOTIDE SEQUENCE [LARGE SCALE GENOMIC DNA]</scope>
    <source>
        <strain>NIES-2133 / IAM M-273 / BP-1</strain>
    </source>
</reference>